<protein>
    <recommendedName>
        <fullName>Adsorption-inhibiting cor protein</fullName>
    </recommendedName>
</protein>
<gene>
    <name type="primary">cor</name>
</gene>
<proteinExistence type="predicted"/>
<accession>P17651</accession>
<keyword id="KW-1043">Host membrane</keyword>
<keyword id="KW-0472">Membrane</keyword>
<evidence type="ECO:0000305" key="1"/>
<organism>
    <name type="scientific">Enterobacteria phage phi80</name>
    <name type="common">Bacteriophage phi-80</name>
    <dbReference type="NCBI Taxonomy" id="10713"/>
    <lineage>
        <taxon>Viruses</taxon>
        <taxon>Duplodnaviria</taxon>
        <taxon>Heunggongvirae</taxon>
        <taxon>Uroviricota</taxon>
        <taxon>Caudoviricetes</taxon>
    </lineage>
</organism>
<sequence length="92" mass="10419">MFKRSGLFAGCFGKCIRTYPAPAERISSPVLRLVVLFTHTVNLNRSFLTANDCSARANWFLFLNYASASCEHDSACRADNQFSHFDSIQRYS</sequence>
<comment type="function">
    <text>Cor may interact with phi-80 receptor on inner- or outer-membrane of E.coli cells and inhibits the absorption of superinfecting phi-80.</text>
</comment>
<comment type="subcellular location">
    <subcellularLocation>
        <location evidence="1">Host membrane</location>
    </subcellularLocation>
</comment>
<name>COR_BPPH8</name>
<dbReference type="EMBL" id="D00360">
    <property type="protein sequence ID" value="BAA00267.1"/>
    <property type="molecule type" value="Genomic_DNA"/>
</dbReference>
<dbReference type="PIR" id="JN0005">
    <property type="entry name" value="JN0005"/>
</dbReference>
<dbReference type="GO" id="GO:0033644">
    <property type="term" value="C:host cell membrane"/>
    <property type="evidence" value="ECO:0007669"/>
    <property type="project" value="UniProtKB-SubCell"/>
</dbReference>
<dbReference type="GO" id="GO:0016020">
    <property type="term" value="C:membrane"/>
    <property type="evidence" value="ECO:0007669"/>
    <property type="project" value="UniProtKB-KW"/>
</dbReference>
<organismHost>
    <name type="scientific">Escherichia coli</name>
    <dbReference type="NCBI Taxonomy" id="562"/>
</organismHost>
<reference key="1">
    <citation type="journal article" date="1985" name="Jpn. J. Genet.">
        <title>Molecular cloning of phi-80 adsorption-inhibiting cor gene.</title>
        <authorList>
            <person name="Matsumoto M."/>
            <person name="Ichikawa N."/>
            <person name="Tanaka S."/>
            <person name="Morita T."/>
            <person name="Matsushiro A."/>
        </authorList>
    </citation>
    <scope>NUCLEOTIDE SEQUENCE [GENOMIC DNA]</scope>
</reference>
<feature type="chain" id="PRO_0000077785" description="Adsorption-inhibiting cor protein">
    <location>
        <begin position="1"/>
        <end position="92"/>
    </location>
</feature>